<name>ARGP_SALCH</name>
<keyword id="KW-0238">DNA-binding</keyword>
<keyword id="KW-0804">Transcription</keyword>
<keyword id="KW-0805">Transcription regulation</keyword>
<reference key="1">
    <citation type="journal article" date="2005" name="Nucleic Acids Res.">
        <title>The genome sequence of Salmonella enterica serovar Choleraesuis, a highly invasive and resistant zoonotic pathogen.</title>
        <authorList>
            <person name="Chiu C.-H."/>
            <person name="Tang P."/>
            <person name="Chu C."/>
            <person name="Hu S."/>
            <person name="Bao Q."/>
            <person name="Yu J."/>
            <person name="Chou Y.-Y."/>
            <person name="Wang H.-S."/>
            <person name="Lee Y.-S."/>
        </authorList>
    </citation>
    <scope>NUCLEOTIDE SEQUENCE [LARGE SCALE GENOMIC DNA]</scope>
    <source>
        <strain>SC-B67</strain>
    </source>
</reference>
<feature type="chain" id="PRO_0000258612" description="HTH-type transcriptional regulator ArgP">
    <location>
        <begin position="1"/>
        <end position="297"/>
    </location>
</feature>
<feature type="domain" description="HTH lysR-type" evidence="1">
    <location>
        <begin position="4"/>
        <end position="60"/>
    </location>
</feature>
<feature type="DNA-binding region" description="H-T-H motif" evidence="1">
    <location>
        <begin position="21"/>
        <end position="40"/>
    </location>
</feature>
<comment type="function">
    <text evidence="1">Controls the transcription of genes involved in arginine and lysine metabolism.</text>
</comment>
<comment type="subunit">
    <text evidence="1">Homodimer.</text>
</comment>
<comment type="similarity">
    <text evidence="2">Belongs to the LysR transcriptional regulatory family.</text>
</comment>
<dbReference type="EMBL" id="AE017220">
    <property type="protein sequence ID" value="AAX66911.1"/>
    <property type="molecule type" value="Genomic_DNA"/>
</dbReference>
<dbReference type="RefSeq" id="WP_000828345.1">
    <property type="nucleotide sequence ID" value="NC_006905.1"/>
</dbReference>
<dbReference type="SMR" id="Q57K51"/>
<dbReference type="GeneID" id="66757362"/>
<dbReference type="KEGG" id="sec:SCH_3005"/>
<dbReference type="HOGENOM" id="CLU_063829_0_0_6"/>
<dbReference type="Proteomes" id="UP000000538">
    <property type="component" value="Chromosome"/>
</dbReference>
<dbReference type="GO" id="GO:0003677">
    <property type="term" value="F:DNA binding"/>
    <property type="evidence" value="ECO:0007669"/>
    <property type="project" value="UniProtKB-UniRule"/>
</dbReference>
<dbReference type="GO" id="GO:0003700">
    <property type="term" value="F:DNA-binding transcription factor activity"/>
    <property type="evidence" value="ECO:0007669"/>
    <property type="project" value="UniProtKB-UniRule"/>
</dbReference>
<dbReference type="CDD" id="cd08428">
    <property type="entry name" value="PBP2_IciA_ArgP"/>
    <property type="match status" value="1"/>
</dbReference>
<dbReference type="FunFam" id="1.10.10.10:FF:000061">
    <property type="entry name" value="HTH-type transcriptional regulator ArgP"/>
    <property type="match status" value="1"/>
</dbReference>
<dbReference type="FunFam" id="3.40.190.290:FF:000002">
    <property type="entry name" value="HTH-type transcriptional regulator ArgP"/>
    <property type="match status" value="1"/>
</dbReference>
<dbReference type="Gene3D" id="3.40.190.290">
    <property type="match status" value="1"/>
</dbReference>
<dbReference type="Gene3D" id="1.10.10.10">
    <property type="entry name" value="Winged helix-like DNA-binding domain superfamily/Winged helix DNA-binding domain"/>
    <property type="match status" value="1"/>
</dbReference>
<dbReference type="HAMAP" id="MF_00513">
    <property type="entry name" value="HTH_type_ArgP"/>
    <property type="match status" value="1"/>
</dbReference>
<dbReference type="InterPro" id="IPR017685">
    <property type="entry name" value="ArgP"/>
</dbReference>
<dbReference type="InterPro" id="IPR023490">
    <property type="entry name" value="ArgP_gammaproteobact"/>
</dbReference>
<dbReference type="InterPro" id="IPR050176">
    <property type="entry name" value="LTTR"/>
</dbReference>
<dbReference type="InterPro" id="IPR005119">
    <property type="entry name" value="LysR_subst-bd"/>
</dbReference>
<dbReference type="InterPro" id="IPR000847">
    <property type="entry name" value="Tscrpt_reg_HTH_LysR"/>
</dbReference>
<dbReference type="InterPro" id="IPR036388">
    <property type="entry name" value="WH-like_DNA-bd_sf"/>
</dbReference>
<dbReference type="InterPro" id="IPR036390">
    <property type="entry name" value="WH_DNA-bd_sf"/>
</dbReference>
<dbReference type="NCBIfam" id="TIGR03298">
    <property type="entry name" value="argP"/>
    <property type="match status" value="1"/>
</dbReference>
<dbReference type="NCBIfam" id="NF002964">
    <property type="entry name" value="PRK03635.1"/>
    <property type="match status" value="1"/>
</dbReference>
<dbReference type="NCBIfam" id="NF009888">
    <property type="entry name" value="PRK13348.1"/>
    <property type="match status" value="1"/>
</dbReference>
<dbReference type="PANTHER" id="PTHR30579:SF2">
    <property type="entry name" value="HTH-TYPE TRANSCRIPTIONAL REGULATOR ARGP"/>
    <property type="match status" value="1"/>
</dbReference>
<dbReference type="PANTHER" id="PTHR30579">
    <property type="entry name" value="TRANSCRIPTIONAL REGULATOR"/>
    <property type="match status" value="1"/>
</dbReference>
<dbReference type="Pfam" id="PF00126">
    <property type="entry name" value="HTH_1"/>
    <property type="match status" value="1"/>
</dbReference>
<dbReference type="Pfam" id="PF03466">
    <property type="entry name" value="LysR_substrate"/>
    <property type="match status" value="1"/>
</dbReference>
<dbReference type="PRINTS" id="PR00039">
    <property type="entry name" value="HTHLYSR"/>
</dbReference>
<dbReference type="SUPFAM" id="SSF53850">
    <property type="entry name" value="Periplasmic binding protein-like II"/>
    <property type="match status" value="1"/>
</dbReference>
<dbReference type="SUPFAM" id="SSF46785">
    <property type="entry name" value="Winged helix' DNA-binding domain"/>
    <property type="match status" value="1"/>
</dbReference>
<dbReference type="PROSITE" id="PS50931">
    <property type="entry name" value="HTH_LYSR"/>
    <property type="match status" value="1"/>
</dbReference>
<sequence length="297" mass="33509">MKRPDYRTLQALDAVIRERGFERAAQKLCITQSAVSQRIKQLENMFGQPLLVRTVPPRPTEQGQKLLALLRQVELLEEEWLGDEQTGSTPLLLSLAVNADSLATWLLPALAPVLADSPIRLNLQVEDETRTQERLRRGEVVGAVSIQHQALPSCLVDKLGALDYLFVASKPFAERYFPNGVTRSSLLKAPAVAFDHLDDMHQAFLQQNFDLPPGSVPCHIVNSSEAFVQLARQGTTCCMIPHLQIEKELESGELINLTPGLLQRRMLYWHRFAPESRMMRKVTDALLEYGHKVLRQD</sequence>
<proteinExistence type="inferred from homology"/>
<organism>
    <name type="scientific">Salmonella choleraesuis (strain SC-B67)</name>
    <dbReference type="NCBI Taxonomy" id="321314"/>
    <lineage>
        <taxon>Bacteria</taxon>
        <taxon>Pseudomonadati</taxon>
        <taxon>Pseudomonadota</taxon>
        <taxon>Gammaproteobacteria</taxon>
        <taxon>Enterobacterales</taxon>
        <taxon>Enterobacteriaceae</taxon>
        <taxon>Salmonella</taxon>
    </lineage>
</organism>
<accession>Q57K51</accession>
<protein>
    <recommendedName>
        <fullName evidence="1">HTH-type transcriptional regulator ArgP</fullName>
    </recommendedName>
</protein>
<evidence type="ECO:0000255" key="1">
    <source>
        <dbReference type="HAMAP-Rule" id="MF_00513"/>
    </source>
</evidence>
<evidence type="ECO:0000305" key="2"/>
<gene>
    <name evidence="1" type="primary">argP</name>
    <name type="synonym">iciA</name>
    <name type="ordered locus">SCH_3005</name>
</gene>